<name>TM247_HUMAN</name>
<sequence length="219" mass="25168">MAAEDREMMEARGAGESCPTFPKMVPGDSKSEGKPRAYLEAESQKPDSSYDYLEEMEACEDGGCQGPLKSLSPKSCRATKGQAGDGPKPAELPPTPGTERNPEMELEKVRMEFELTRLKYLHEKNQRQRQHEVVMEQLQRERQHEVVMEQLQQEAAPRLFSGGLQNFLLPQNQFAMFLYCFIFIHIIYVTKEMVFFLFAKHYLFCIAAILLCLIKTFWS</sequence>
<proteinExistence type="evidence at protein level"/>
<accession>A6NEH6</accession>
<gene>
    <name type="primary">TMEM247</name>
</gene>
<comment type="subcellular location">
    <subcellularLocation>
        <location evidence="3">Membrane</location>
        <topology evidence="3">Multi-pass membrane protein</topology>
    </subcellularLocation>
</comment>
<protein>
    <recommendedName>
        <fullName>Transmembrane protein 247</fullName>
    </recommendedName>
</protein>
<dbReference type="EMBL" id="AC018682">
    <property type="status" value="NOT_ANNOTATED_CDS"/>
    <property type="molecule type" value="Genomic_DNA"/>
</dbReference>
<dbReference type="CCDS" id="CCDS56117.1"/>
<dbReference type="RefSeq" id="NP_001138523.1">
    <property type="nucleotide sequence ID" value="NM_001145051.2"/>
</dbReference>
<dbReference type="RefSeq" id="NP_001411113.1">
    <property type="nucleotide sequence ID" value="NM_001424184.1"/>
</dbReference>
<dbReference type="SMR" id="A6NEH6"/>
<dbReference type="FunCoup" id="A6NEH6">
    <property type="interactions" value="140"/>
</dbReference>
<dbReference type="STRING" id="9606.ENSP00000388684"/>
<dbReference type="GlyGen" id="A6NEH6">
    <property type="glycosylation" value="1 site"/>
</dbReference>
<dbReference type="iPTMnet" id="A6NEH6"/>
<dbReference type="PhosphoSitePlus" id="A6NEH6"/>
<dbReference type="BioMuta" id="TMEM247"/>
<dbReference type="MassIVE" id="A6NEH6"/>
<dbReference type="PaxDb" id="9606-ENSP00000388684"/>
<dbReference type="PeptideAtlas" id="A6NEH6"/>
<dbReference type="ProteomicsDB" id="983"/>
<dbReference type="Antibodypedia" id="82417">
    <property type="antibodies" value="2 antibodies from 2 providers"/>
</dbReference>
<dbReference type="DNASU" id="388946"/>
<dbReference type="Ensembl" id="ENST00000434431.2">
    <property type="protein sequence ID" value="ENSP00000388684.1"/>
    <property type="gene ID" value="ENSG00000284701.1"/>
</dbReference>
<dbReference type="GeneID" id="388946"/>
<dbReference type="MANE-Select" id="ENST00000434431.2">
    <property type="protein sequence ID" value="ENSP00000388684.1"/>
    <property type="RefSeq nucleotide sequence ID" value="NM_001424184.1"/>
    <property type="RefSeq protein sequence ID" value="NP_001411113.1"/>
</dbReference>
<dbReference type="UCSC" id="uc061ivl.1">
    <property type="organism name" value="human"/>
</dbReference>
<dbReference type="AGR" id="HGNC:42967"/>
<dbReference type="GeneCards" id="TMEM247"/>
<dbReference type="HGNC" id="HGNC:42967">
    <property type="gene designation" value="TMEM247"/>
</dbReference>
<dbReference type="HPA" id="ENSG00000284701">
    <property type="expression patterns" value="Tissue enriched (testis)"/>
</dbReference>
<dbReference type="neXtProt" id="NX_A6NEH6"/>
<dbReference type="VEuPathDB" id="HostDB:ENSG00000284701"/>
<dbReference type="eggNOG" id="ENOG502SRZ8">
    <property type="taxonomic scope" value="Eukaryota"/>
</dbReference>
<dbReference type="GeneTree" id="ENSGT00390000002879"/>
<dbReference type="HOGENOM" id="CLU_112717_0_0_1"/>
<dbReference type="InParanoid" id="A6NEH6"/>
<dbReference type="OMA" id="DPMSEGK"/>
<dbReference type="OrthoDB" id="9427125at2759"/>
<dbReference type="PAN-GO" id="A6NEH6">
    <property type="GO annotations" value="1 GO annotation based on evolutionary models"/>
</dbReference>
<dbReference type="PhylomeDB" id="A6NEH6"/>
<dbReference type="TreeFam" id="TF337834"/>
<dbReference type="PathwayCommons" id="A6NEH6"/>
<dbReference type="SignaLink" id="A6NEH6"/>
<dbReference type="BioGRID-ORCS" id="388946">
    <property type="hits" value="7 hits in 1046 CRISPR screens"/>
</dbReference>
<dbReference type="GenomeRNAi" id="388946"/>
<dbReference type="Pharos" id="A6NEH6">
    <property type="development level" value="Tdark"/>
</dbReference>
<dbReference type="PRO" id="PR:A6NEH6"/>
<dbReference type="Proteomes" id="UP000005640">
    <property type="component" value="Chromosome 2"/>
</dbReference>
<dbReference type="RNAct" id="A6NEH6">
    <property type="molecule type" value="protein"/>
</dbReference>
<dbReference type="Bgee" id="ENSG00000284701">
    <property type="expression patterns" value="Expressed in right testis and 20 other cell types or tissues"/>
</dbReference>
<dbReference type="GO" id="GO:0005783">
    <property type="term" value="C:endoplasmic reticulum"/>
    <property type="evidence" value="ECO:0000318"/>
    <property type="project" value="GO_Central"/>
</dbReference>
<dbReference type="GO" id="GO:0016020">
    <property type="term" value="C:membrane"/>
    <property type="evidence" value="ECO:0007669"/>
    <property type="project" value="UniProtKB-SubCell"/>
</dbReference>
<dbReference type="InterPro" id="IPR029200">
    <property type="entry name" value="TMEM247"/>
</dbReference>
<dbReference type="PANTHER" id="PTHR36691">
    <property type="entry name" value="TRANSMEMBRANE PROTEIN 247"/>
    <property type="match status" value="1"/>
</dbReference>
<dbReference type="PANTHER" id="PTHR36691:SF1">
    <property type="entry name" value="TRANSMEMBRANE PROTEIN 247"/>
    <property type="match status" value="1"/>
</dbReference>
<dbReference type="Pfam" id="PF15444">
    <property type="entry name" value="TMEM247"/>
    <property type="match status" value="2"/>
</dbReference>
<reference key="1">
    <citation type="journal article" date="2005" name="Nature">
        <title>Generation and annotation of the DNA sequences of human chromosomes 2 and 4.</title>
        <authorList>
            <person name="Hillier L.W."/>
            <person name="Graves T.A."/>
            <person name="Fulton R.S."/>
            <person name="Fulton L.A."/>
            <person name="Pepin K.H."/>
            <person name="Minx P."/>
            <person name="Wagner-McPherson C."/>
            <person name="Layman D."/>
            <person name="Wylie K."/>
            <person name="Sekhon M."/>
            <person name="Becker M.C."/>
            <person name="Fewell G.A."/>
            <person name="Delehaunty K.D."/>
            <person name="Miner T.L."/>
            <person name="Nash W.E."/>
            <person name="Kremitzki C."/>
            <person name="Oddy L."/>
            <person name="Du H."/>
            <person name="Sun H."/>
            <person name="Bradshaw-Cordum H."/>
            <person name="Ali J."/>
            <person name="Carter J."/>
            <person name="Cordes M."/>
            <person name="Harris A."/>
            <person name="Isak A."/>
            <person name="van Brunt A."/>
            <person name="Nguyen C."/>
            <person name="Du F."/>
            <person name="Courtney L."/>
            <person name="Kalicki J."/>
            <person name="Ozersky P."/>
            <person name="Abbott S."/>
            <person name="Armstrong J."/>
            <person name="Belter E.A."/>
            <person name="Caruso L."/>
            <person name="Cedroni M."/>
            <person name="Cotton M."/>
            <person name="Davidson T."/>
            <person name="Desai A."/>
            <person name="Elliott G."/>
            <person name="Erb T."/>
            <person name="Fronick C."/>
            <person name="Gaige T."/>
            <person name="Haakenson W."/>
            <person name="Haglund K."/>
            <person name="Holmes A."/>
            <person name="Harkins R."/>
            <person name="Kim K."/>
            <person name="Kruchowski S.S."/>
            <person name="Strong C.M."/>
            <person name="Grewal N."/>
            <person name="Goyea E."/>
            <person name="Hou S."/>
            <person name="Levy A."/>
            <person name="Martinka S."/>
            <person name="Mead K."/>
            <person name="McLellan M.D."/>
            <person name="Meyer R."/>
            <person name="Randall-Maher J."/>
            <person name="Tomlinson C."/>
            <person name="Dauphin-Kohlberg S."/>
            <person name="Kozlowicz-Reilly A."/>
            <person name="Shah N."/>
            <person name="Swearengen-Shahid S."/>
            <person name="Snider J."/>
            <person name="Strong J.T."/>
            <person name="Thompson J."/>
            <person name="Yoakum M."/>
            <person name="Leonard S."/>
            <person name="Pearman C."/>
            <person name="Trani L."/>
            <person name="Radionenko M."/>
            <person name="Waligorski J.E."/>
            <person name="Wang C."/>
            <person name="Rock S.M."/>
            <person name="Tin-Wollam A.-M."/>
            <person name="Maupin R."/>
            <person name="Latreille P."/>
            <person name="Wendl M.C."/>
            <person name="Yang S.-P."/>
            <person name="Pohl C."/>
            <person name="Wallis J.W."/>
            <person name="Spieth J."/>
            <person name="Bieri T.A."/>
            <person name="Berkowicz N."/>
            <person name="Nelson J.O."/>
            <person name="Osborne J."/>
            <person name="Ding L."/>
            <person name="Meyer R."/>
            <person name="Sabo A."/>
            <person name="Shotland Y."/>
            <person name="Sinha P."/>
            <person name="Wohldmann P.E."/>
            <person name="Cook L.L."/>
            <person name="Hickenbotham M.T."/>
            <person name="Eldred J."/>
            <person name="Williams D."/>
            <person name="Jones T.A."/>
            <person name="She X."/>
            <person name="Ciccarelli F.D."/>
            <person name="Izaurralde E."/>
            <person name="Taylor J."/>
            <person name="Schmutz J."/>
            <person name="Myers R.M."/>
            <person name="Cox D.R."/>
            <person name="Huang X."/>
            <person name="McPherson J.D."/>
            <person name="Mardis E.R."/>
            <person name="Clifton S.W."/>
            <person name="Warren W.C."/>
            <person name="Chinwalla A.T."/>
            <person name="Eddy S.R."/>
            <person name="Marra M.A."/>
            <person name="Ovcharenko I."/>
            <person name="Furey T.S."/>
            <person name="Miller W."/>
            <person name="Eichler E.E."/>
            <person name="Bork P."/>
            <person name="Suyama M."/>
            <person name="Torrents D."/>
            <person name="Waterston R.H."/>
            <person name="Wilson R.K."/>
        </authorList>
    </citation>
    <scope>NUCLEOTIDE SEQUENCE [LARGE SCALE GENOMIC DNA]</scope>
</reference>
<keyword id="KW-0175">Coiled coil</keyword>
<keyword id="KW-0472">Membrane</keyword>
<keyword id="KW-1267">Proteomics identification</keyword>
<keyword id="KW-1185">Reference proteome</keyword>
<keyword id="KW-0812">Transmembrane</keyword>
<keyword id="KW-1133">Transmembrane helix</keyword>
<evidence type="ECO:0000255" key="1"/>
<evidence type="ECO:0000256" key="2">
    <source>
        <dbReference type="SAM" id="MobiDB-lite"/>
    </source>
</evidence>
<evidence type="ECO:0000305" key="3"/>
<organism>
    <name type="scientific">Homo sapiens</name>
    <name type="common">Human</name>
    <dbReference type="NCBI Taxonomy" id="9606"/>
    <lineage>
        <taxon>Eukaryota</taxon>
        <taxon>Metazoa</taxon>
        <taxon>Chordata</taxon>
        <taxon>Craniata</taxon>
        <taxon>Vertebrata</taxon>
        <taxon>Euteleostomi</taxon>
        <taxon>Mammalia</taxon>
        <taxon>Eutheria</taxon>
        <taxon>Euarchontoglires</taxon>
        <taxon>Primates</taxon>
        <taxon>Haplorrhini</taxon>
        <taxon>Catarrhini</taxon>
        <taxon>Hominidae</taxon>
        <taxon>Homo</taxon>
    </lineage>
</organism>
<feature type="chain" id="PRO_0000328813" description="Transmembrane protein 247">
    <location>
        <begin position="1"/>
        <end position="219"/>
    </location>
</feature>
<feature type="transmembrane region" description="Helical" evidence="1">
    <location>
        <begin position="167"/>
        <end position="187"/>
    </location>
</feature>
<feature type="transmembrane region" description="Helical" evidence="1">
    <location>
        <begin position="194"/>
        <end position="214"/>
    </location>
</feature>
<feature type="region of interest" description="Disordered" evidence="2">
    <location>
        <begin position="1"/>
        <end position="101"/>
    </location>
</feature>
<feature type="coiled-coil region" evidence="1">
    <location>
        <begin position="121"/>
        <end position="156"/>
    </location>
</feature>
<feature type="compositionally biased region" description="Basic and acidic residues" evidence="2">
    <location>
        <begin position="1"/>
        <end position="10"/>
    </location>
</feature>
<feature type="compositionally biased region" description="Basic and acidic residues" evidence="2">
    <location>
        <begin position="29"/>
        <end position="45"/>
    </location>
</feature>